<proteinExistence type="evidence at protein level"/>
<protein>
    <recommendedName>
        <fullName>WD repeat-containing protein 35</fullName>
    </recommendedName>
    <alternativeName>
        <fullName>Naofen</fullName>
    </alternativeName>
</protein>
<sequence length="1170" mass="132779">MFFYLSKKIAVPNNVKLKCISWNKDQGFIACGGEDGLLKVLRLETQTDDSKLRGLAAPSNLSMNQNLEGHSGAVQVVTWNEQYQKLTTSDQNGLIIVWMLYKGSWYEEMINNRNKSVVRSMSWNADGQKICIVYEDGAVIVGSVDGNRIWGKDLKGIQLCHVTWSADSKILLFGMANGEIHIYDNQGNFIMKMKLNCLVNVTGAISIAGIHWYHGTEGYVEPDCPCLAICFDNGRCQIMRHENDQNPVLIDTGMYVVGIQWNHIGSVLAVAGSQKVVTQDKDVNIVQFYTPFGEHLGTLKVPGKQMCSLSWEGGGLKIALAVDSFIYFANIRPDYKWGYCSNTVVYAYTRPDRPEYCVVFWDTKNNEKYVKYVKSLISITTCGDFCILATKADENHPQFVLVLCNSIGTPLDPKYIDLVPLFVAMTKTHVIAASKEALYTWQYRVAKKLTALEINQITRSRKEGRERIYHVDDVPSGSVDGVFDYSKAIQGTRDPICAITASDKTLIVGRESGVIQRYSFPNVALIQKYSLDCRACQLSLNCNSSRLAIIDIAGVLTFFDLDTRVTDSTGQQVVGELLKLERKDVWDMKWAKDNPDLFAMMEKTRMYVFRNLDPEEPIQTSGYICNFEDLEIKSVLLDEILKNPEHPSKDYIMNFEIRSLRDSRALIEKVGIEDASQFIEDNPHPRLWRLLAEAALQKLDLYTAQQAFVRCKDYQGIKFVKRLGNLQSESMKQAEVIAYFGRFEEAERMYLDMDRRDLAIGLRLKLGDWFRVLQLLKTGSGDADDSLLEQAHNAIGDYFADRQKWMNAVQYYVKGRNQERLAECYYMLEDYEGLENLANSLPENHKLLPEIAQMFVRVGMCEQAVSAFLKCNQPKAAVDTCVHLNQWNKAVELAKSHSMKEIGSLLARYASHLLEKNKTLDAIELYRKASYFFDAAKLMYKIADEEAKKRTKPLRVKKLYVLSALLIEQYHEQMKNAQRGKVKGKNSEATSALAGLLEEEVLSTTSRFTDNAWRGAEAYHFFILAQRQLYEGYVDTALKTALHLRDYEDIIPSVEIYSLLALCACASRAFGTCSKAFIKLESLETLSAEQKQQYEDLALEIFTKHTPKDNRKSELNSLLEGGEGKLPTCIATGSPIIEYQFWVCKVCKHYVLAQEISNYNFCPLCHSSVE</sequence>
<gene>
    <name type="primary">Wdr35</name>
</gene>
<feature type="chain" id="PRO_0000405406" description="WD repeat-containing protein 35">
    <location>
        <begin position="1"/>
        <end position="1170"/>
    </location>
</feature>
<feature type="repeat" description="WD 1">
    <location>
        <begin position="12"/>
        <end position="51"/>
    </location>
</feature>
<feature type="repeat" description="WD 2">
    <location>
        <begin position="69"/>
        <end position="108"/>
    </location>
</feature>
<feature type="repeat" description="WD 3">
    <location>
        <begin position="113"/>
        <end position="152"/>
    </location>
</feature>
<feature type="repeat" description="WD 4">
    <location>
        <begin position="154"/>
        <end position="193"/>
    </location>
</feature>
<feature type="repeat" description="WD 5">
    <location>
        <begin position="491"/>
        <end position="528"/>
    </location>
</feature>
<keyword id="KW-0966">Cell projection</keyword>
<keyword id="KW-0969">Cilium</keyword>
<keyword id="KW-0970">Cilium biogenesis/degradation</keyword>
<keyword id="KW-0963">Cytoplasm</keyword>
<keyword id="KW-0206">Cytoskeleton</keyword>
<keyword id="KW-1185">Reference proteome</keyword>
<keyword id="KW-0677">Repeat</keyword>
<keyword id="KW-0853">WD repeat</keyword>
<reference key="1">
    <citation type="journal article" date="2010" name="Biochem. Biophys. Res. Commun.">
        <title>Naofen, a novel WD40-repeat protein, mediates spontaneous and tumor necrosis factor-induced apoptosis.</title>
        <authorList>
            <person name="Feng G.G."/>
            <person name="Li C."/>
            <person name="Huang L."/>
            <person name="Tsunekawa K."/>
            <person name="Sato Y."/>
            <person name="Fujiwara Y."/>
            <person name="Komatsu T."/>
            <person name="Honda T."/>
            <person name="Fan J.H."/>
            <person name="Goto H."/>
            <person name="Koide T."/>
            <person name="Hasegawa T."/>
            <person name="Ishikawa N."/>
        </authorList>
    </citation>
    <scope>NUCLEOTIDE SEQUENCE [MRNA]</scope>
    <scope>FUNCTION</scope>
    <scope>TISSUE SPECIFICITY</scope>
    <source>
        <strain>Wistar</strain>
    </source>
</reference>
<reference key="2">
    <citation type="submission" date="2005-07" db="EMBL/GenBank/DDBJ databases">
        <authorList>
            <person name="Mural R.J."/>
            <person name="Adams M.D."/>
            <person name="Myers E.W."/>
            <person name="Smith H.O."/>
            <person name="Venter J.C."/>
        </authorList>
    </citation>
    <scope>NUCLEOTIDE SEQUENCE [LARGE SCALE GENOMIC DNA]</scope>
</reference>
<accession>A6N6J5</accession>
<dbReference type="EMBL" id="EF613262">
    <property type="protein sequence ID" value="ABR22620.1"/>
    <property type="molecule type" value="mRNA"/>
</dbReference>
<dbReference type="EMBL" id="CH473947">
    <property type="protein sequence ID" value="EDM03084.1"/>
    <property type="molecule type" value="Genomic_DNA"/>
</dbReference>
<dbReference type="RefSeq" id="NP_001092810.1">
    <property type="nucleotide sequence ID" value="NM_001099340.1"/>
</dbReference>
<dbReference type="SMR" id="A6N6J5"/>
<dbReference type="FunCoup" id="A6N6J5">
    <property type="interactions" value="1483"/>
</dbReference>
<dbReference type="STRING" id="10116.ENSRNOP00000042019"/>
<dbReference type="PaxDb" id="10116-ENSRNOP00000042019"/>
<dbReference type="PeptideAtlas" id="A6N6J5"/>
<dbReference type="Ensembl" id="ENSRNOT00000051970.5">
    <property type="protein sequence ID" value="ENSRNOP00000042019.4"/>
    <property type="gene ID" value="ENSRNOG00000028783.5"/>
</dbReference>
<dbReference type="GeneID" id="503018"/>
<dbReference type="KEGG" id="rno:503018"/>
<dbReference type="AGR" id="RGD:1564116"/>
<dbReference type="CTD" id="57539"/>
<dbReference type="RGD" id="1564116">
    <property type="gene designation" value="Wdr35"/>
</dbReference>
<dbReference type="eggNOG" id="KOG2041">
    <property type="taxonomic scope" value="Eukaryota"/>
</dbReference>
<dbReference type="GeneTree" id="ENSGT00940000155745"/>
<dbReference type="HOGENOM" id="CLU_004048_1_0_1"/>
<dbReference type="InParanoid" id="A6N6J5"/>
<dbReference type="OrthoDB" id="10260567at2759"/>
<dbReference type="PhylomeDB" id="A6N6J5"/>
<dbReference type="Reactome" id="R-RNO-5610787">
    <property type="pathway name" value="Hedgehog 'off' state"/>
</dbReference>
<dbReference type="Reactome" id="R-RNO-5620924">
    <property type="pathway name" value="Intraflagellar transport"/>
</dbReference>
<dbReference type="PRO" id="PR:A6N6J5"/>
<dbReference type="Proteomes" id="UP000002494">
    <property type="component" value="Chromosome 6"/>
</dbReference>
<dbReference type="Proteomes" id="UP000234681">
    <property type="component" value="Chromosome 6"/>
</dbReference>
<dbReference type="Bgee" id="ENSRNOG00000028783">
    <property type="expression patterns" value="Expressed in testis and 18 other cell types or tissues"/>
</dbReference>
<dbReference type="GO" id="GO:0005930">
    <property type="term" value="C:axoneme"/>
    <property type="evidence" value="ECO:0000250"/>
    <property type="project" value="UniProtKB"/>
</dbReference>
<dbReference type="GO" id="GO:0005813">
    <property type="term" value="C:centrosome"/>
    <property type="evidence" value="ECO:0000250"/>
    <property type="project" value="UniProtKB"/>
</dbReference>
<dbReference type="GO" id="GO:0036064">
    <property type="term" value="C:ciliary basal body"/>
    <property type="evidence" value="ECO:0000250"/>
    <property type="project" value="UniProtKB"/>
</dbReference>
<dbReference type="GO" id="GO:0030991">
    <property type="term" value="C:intraciliary transport particle A"/>
    <property type="evidence" value="ECO:0000250"/>
    <property type="project" value="UniProtKB"/>
</dbReference>
<dbReference type="GO" id="GO:0071333">
    <property type="term" value="P:cellular response to glucose stimulus"/>
    <property type="evidence" value="ECO:0000270"/>
    <property type="project" value="RGD"/>
</dbReference>
<dbReference type="GO" id="GO:1990830">
    <property type="term" value="P:cellular response to leukemia inhibitory factor"/>
    <property type="evidence" value="ECO:0000266"/>
    <property type="project" value="RGD"/>
</dbReference>
<dbReference type="GO" id="GO:0071356">
    <property type="term" value="P:cellular response to tumor necrosis factor"/>
    <property type="evidence" value="ECO:0000315"/>
    <property type="project" value="RGD"/>
</dbReference>
<dbReference type="GO" id="GO:0071466">
    <property type="term" value="P:cellular response to xenobiotic stimulus"/>
    <property type="evidence" value="ECO:0000270"/>
    <property type="project" value="RGD"/>
</dbReference>
<dbReference type="GO" id="GO:0060271">
    <property type="term" value="P:cilium assembly"/>
    <property type="evidence" value="ECO:0000250"/>
    <property type="project" value="UniProtKB"/>
</dbReference>
<dbReference type="GO" id="GO:0035721">
    <property type="term" value="P:intraciliary retrograde transport"/>
    <property type="evidence" value="ECO:0000266"/>
    <property type="project" value="RGD"/>
</dbReference>
<dbReference type="GO" id="GO:0042073">
    <property type="term" value="P:intraciliary transport"/>
    <property type="evidence" value="ECO:0000266"/>
    <property type="project" value="RGD"/>
</dbReference>
<dbReference type="GO" id="GO:0097421">
    <property type="term" value="P:liver regeneration"/>
    <property type="evidence" value="ECO:0000270"/>
    <property type="project" value="RGD"/>
</dbReference>
<dbReference type="GO" id="GO:0010629">
    <property type="term" value="P:negative regulation of gene expression"/>
    <property type="evidence" value="ECO:0000314"/>
    <property type="project" value="RGD"/>
</dbReference>
<dbReference type="GO" id="GO:0045019">
    <property type="term" value="P:negative regulation of nitric oxide biosynthetic process"/>
    <property type="evidence" value="ECO:0000314"/>
    <property type="project" value="RGD"/>
</dbReference>
<dbReference type="GO" id="GO:2001238">
    <property type="term" value="P:positive regulation of extrinsic apoptotic signaling pathway"/>
    <property type="evidence" value="ECO:0000315"/>
    <property type="project" value="RGD"/>
</dbReference>
<dbReference type="GO" id="GO:0090200">
    <property type="term" value="P:positive regulation of release of cytochrome c from mitochondria"/>
    <property type="evidence" value="ECO:0000315"/>
    <property type="project" value="RGD"/>
</dbReference>
<dbReference type="GO" id="GO:0045907">
    <property type="term" value="P:positive regulation of vasoconstriction"/>
    <property type="evidence" value="ECO:0000314"/>
    <property type="project" value="RGD"/>
</dbReference>
<dbReference type="GO" id="GO:0061512">
    <property type="term" value="P:protein localization to cilium"/>
    <property type="evidence" value="ECO:0000266"/>
    <property type="project" value="RGD"/>
</dbReference>
<dbReference type="GO" id="GO:0032496">
    <property type="term" value="P:response to lipopolysaccharide"/>
    <property type="evidence" value="ECO:0000270"/>
    <property type="project" value="RGD"/>
</dbReference>
<dbReference type="GO" id="GO:0009636">
    <property type="term" value="P:response to toxic substance"/>
    <property type="evidence" value="ECO:0000270"/>
    <property type="project" value="RGD"/>
</dbReference>
<dbReference type="FunFam" id="1.25.40.470:FF:000004">
    <property type="entry name" value="WD repeat-containing protein 35"/>
    <property type="match status" value="1"/>
</dbReference>
<dbReference type="FunFam" id="2.130.10.10:FF:000187">
    <property type="entry name" value="WD repeat-containing protein 35"/>
    <property type="match status" value="1"/>
</dbReference>
<dbReference type="Gene3D" id="1.25.40.470">
    <property type="match status" value="1"/>
</dbReference>
<dbReference type="Gene3D" id="2.130.10.10">
    <property type="entry name" value="YVTN repeat-like/Quinoprotein amine dehydrogenase"/>
    <property type="match status" value="1"/>
</dbReference>
<dbReference type="InterPro" id="IPR056158">
    <property type="entry name" value="Beta-prop_WDR35_2nd"/>
</dbReference>
<dbReference type="InterPro" id="IPR056159">
    <property type="entry name" value="Beta-prop_WDR35_TULP_N"/>
</dbReference>
<dbReference type="InterPro" id="IPR039857">
    <property type="entry name" value="Ift122/121"/>
</dbReference>
<dbReference type="InterPro" id="IPR056157">
    <property type="entry name" value="TPR_IFT80_172_dom"/>
</dbReference>
<dbReference type="InterPro" id="IPR015943">
    <property type="entry name" value="WD40/YVTN_repeat-like_dom_sf"/>
</dbReference>
<dbReference type="InterPro" id="IPR036322">
    <property type="entry name" value="WD40_repeat_dom_sf"/>
</dbReference>
<dbReference type="InterPro" id="IPR001680">
    <property type="entry name" value="WD40_rpt"/>
</dbReference>
<dbReference type="InterPro" id="IPR017233">
    <property type="entry name" value="WDR35"/>
</dbReference>
<dbReference type="InterPro" id="IPR056170">
    <property type="entry name" value="Znf_IFT121-like"/>
</dbReference>
<dbReference type="PANTHER" id="PTHR12764:SF5">
    <property type="entry name" value="LD29485P"/>
    <property type="match status" value="1"/>
</dbReference>
<dbReference type="PANTHER" id="PTHR12764">
    <property type="entry name" value="WD REPEAT DOMAIN-RELATED"/>
    <property type="match status" value="1"/>
</dbReference>
<dbReference type="Pfam" id="PF23390">
    <property type="entry name" value="Beta-prop_WDR35_2nd"/>
    <property type="match status" value="1"/>
</dbReference>
<dbReference type="Pfam" id="PF24797">
    <property type="entry name" value="Beta-prop_WDR35_TULP_N"/>
    <property type="match status" value="1"/>
</dbReference>
<dbReference type="Pfam" id="PF23387">
    <property type="entry name" value="TPR_IFT80_172"/>
    <property type="match status" value="1"/>
</dbReference>
<dbReference type="Pfam" id="PF25170">
    <property type="entry name" value="TPR_WDR35"/>
    <property type="match status" value="1"/>
</dbReference>
<dbReference type="Pfam" id="PF23145">
    <property type="entry name" value="Zf_2nd_IFT121"/>
    <property type="match status" value="1"/>
</dbReference>
<dbReference type="PIRSF" id="PIRSF037536">
    <property type="entry name" value="WD_repeat_p35"/>
    <property type="match status" value="1"/>
</dbReference>
<dbReference type="SMART" id="SM00320">
    <property type="entry name" value="WD40"/>
    <property type="match status" value="4"/>
</dbReference>
<dbReference type="SUPFAM" id="SSF82171">
    <property type="entry name" value="DPP6 N-terminal domain-like"/>
    <property type="match status" value="1"/>
</dbReference>
<dbReference type="SUPFAM" id="SSF50978">
    <property type="entry name" value="WD40 repeat-like"/>
    <property type="match status" value="1"/>
</dbReference>
<dbReference type="PROSITE" id="PS50082">
    <property type="entry name" value="WD_REPEATS_2"/>
    <property type="match status" value="1"/>
</dbReference>
<dbReference type="PROSITE" id="PS50294">
    <property type="entry name" value="WD_REPEATS_REGION"/>
    <property type="match status" value="1"/>
</dbReference>
<comment type="function">
    <text evidence="2 3">As a component of the IFT complex A (IFT-A), a complex required for retrograde ciliary transport and entry into cilia of G protein-coupled receptors (GPCRs), it is involved in ciliogenesis and ciliary protein trafficking (By similarity). May promote CASP3 activation and TNF-stimulated apoptosis (PubMed:20193664).</text>
</comment>
<comment type="subunit">
    <text evidence="1 2">Component of the IFT complex A (IFT-A) complex. IFT-A complex is divided into a core subcomplex composed of IFT122:IFT140:WDR19 which is associated with TULP3 and a peripheral subcomplex composed of IFT43:WDR35:TTC21B. Interacts directy with IFT122, ITF43 and TTC21B. Interacts with IFT43. Interacts with CFAP61 (By similarity).</text>
</comment>
<comment type="subcellular location">
    <subcellularLocation>
        <location evidence="1">Cytoplasm</location>
        <location evidence="1">Cytoskeleton</location>
        <location evidence="1">Microtubule organizing center</location>
        <location evidence="1">Centrosome</location>
    </subcellularLocation>
    <subcellularLocation>
        <location evidence="1">Cytoplasm</location>
        <location evidence="1">Cytoskeleton</location>
        <location evidence="1">Cilium axoneme</location>
    </subcellularLocation>
    <subcellularLocation>
        <location evidence="1">Cytoplasm</location>
        <location evidence="1">Cytoskeleton</location>
        <location evidence="1">Cilium basal body</location>
    </subcellularLocation>
</comment>
<comment type="tissue specificity">
    <text evidence="3">Expressed at high levels in testis and at lower levels in the brain (at protein level). Also present in other tissues, including heart, uterus, spinal cord, ovary, liver, kidney, lung, pancreas and stomach.</text>
</comment>
<evidence type="ECO:0000250" key="1">
    <source>
        <dbReference type="UniProtKB" id="Q8BND3"/>
    </source>
</evidence>
<evidence type="ECO:0000250" key="2">
    <source>
        <dbReference type="UniProtKB" id="Q9P2L0"/>
    </source>
</evidence>
<evidence type="ECO:0000269" key="3">
    <source>
    </source>
</evidence>
<organism>
    <name type="scientific">Rattus norvegicus</name>
    <name type="common">Rat</name>
    <dbReference type="NCBI Taxonomy" id="10116"/>
    <lineage>
        <taxon>Eukaryota</taxon>
        <taxon>Metazoa</taxon>
        <taxon>Chordata</taxon>
        <taxon>Craniata</taxon>
        <taxon>Vertebrata</taxon>
        <taxon>Euteleostomi</taxon>
        <taxon>Mammalia</taxon>
        <taxon>Eutheria</taxon>
        <taxon>Euarchontoglires</taxon>
        <taxon>Glires</taxon>
        <taxon>Rodentia</taxon>
        <taxon>Myomorpha</taxon>
        <taxon>Muroidea</taxon>
        <taxon>Muridae</taxon>
        <taxon>Murinae</taxon>
        <taxon>Rattus</taxon>
    </lineage>
</organism>
<name>WDR35_RAT</name>